<reference key="1">
    <citation type="submission" date="2007-05" db="EMBL/GenBank/DDBJ databases">
        <title>Complete sequence of Thermotoga petrophila RKU-1.</title>
        <authorList>
            <consortium name="US DOE Joint Genome Institute"/>
            <person name="Copeland A."/>
            <person name="Lucas S."/>
            <person name="Lapidus A."/>
            <person name="Barry K."/>
            <person name="Glavina del Rio T."/>
            <person name="Dalin E."/>
            <person name="Tice H."/>
            <person name="Pitluck S."/>
            <person name="Sims D."/>
            <person name="Brettin T."/>
            <person name="Bruce D."/>
            <person name="Detter J.C."/>
            <person name="Han C."/>
            <person name="Tapia R."/>
            <person name="Schmutz J."/>
            <person name="Larimer F."/>
            <person name="Land M."/>
            <person name="Hauser L."/>
            <person name="Kyrpides N."/>
            <person name="Mikhailova N."/>
            <person name="Nelson K."/>
            <person name="Gogarten J.P."/>
            <person name="Noll K."/>
            <person name="Richardson P."/>
        </authorList>
    </citation>
    <scope>NUCLEOTIDE SEQUENCE [LARGE SCALE GENOMIC DNA]</scope>
    <source>
        <strain>ATCC BAA-488 / DSM 13995 / JCM 10881 / RKU-1</strain>
    </source>
</reference>
<proteinExistence type="inferred from homology"/>
<name>SSRP_THEP1</name>
<protein>
    <recommendedName>
        <fullName evidence="1">SsrA-binding protein</fullName>
    </recommendedName>
    <alternativeName>
        <fullName evidence="1">Small protein B</fullName>
    </alternativeName>
</protein>
<keyword id="KW-0963">Cytoplasm</keyword>
<keyword id="KW-0694">RNA-binding</keyword>
<accession>A5IKG7</accession>
<evidence type="ECO:0000255" key="1">
    <source>
        <dbReference type="HAMAP-Rule" id="MF_00023"/>
    </source>
</evidence>
<comment type="function">
    <text evidence="1">Required for rescue of stalled ribosomes mediated by trans-translation. Binds to transfer-messenger RNA (tmRNA), required for stable association of tmRNA with ribosomes. tmRNA and SmpB together mimic tRNA shape, replacing the anticodon stem-loop with SmpB. tmRNA is encoded by the ssrA gene; the 2 termini fold to resemble tRNA(Ala) and it encodes a 'tag peptide', a short internal open reading frame. During trans-translation Ala-aminoacylated tmRNA acts like a tRNA, entering the A-site of stalled ribosomes, displacing the stalled mRNA. The ribosome then switches to translate the ORF on the tmRNA; the nascent peptide is terminated with the 'tag peptide' encoded by the tmRNA and targeted for degradation. The ribosome is freed to recommence translation, which seems to be the essential function of trans-translation.</text>
</comment>
<comment type="subcellular location">
    <subcellularLocation>
        <location evidence="1">Cytoplasm</location>
    </subcellularLocation>
    <text evidence="1">The tmRNA-SmpB complex associates with stalled 70S ribosomes.</text>
</comment>
<comment type="similarity">
    <text evidence="1">Belongs to the SmpB family.</text>
</comment>
<sequence>MVKVVATNKKAYTDYEILETYEAGIVLTGTEVKSLRNGSVNFKDSFCRFKNGELYLLNLHIPPYSHGGVYNHDPERPRKLLLHKRELKRLMGKVQEEGVTIVPLKIYFNDRGIAKVEIAVARGKKKYDKREAIKKREMERKIREYMKYSR</sequence>
<dbReference type="EMBL" id="CP000702">
    <property type="protein sequence ID" value="ABQ46690.1"/>
    <property type="molecule type" value="Genomic_DNA"/>
</dbReference>
<dbReference type="RefSeq" id="WP_011943280.1">
    <property type="nucleotide sequence ID" value="NC_009486.1"/>
</dbReference>
<dbReference type="SMR" id="A5IKG7"/>
<dbReference type="STRING" id="390874.Tpet_0670"/>
<dbReference type="KEGG" id="tpt:Tpet_0670"/>
<dbReference type="eggNOG" id="COG0691">
    <property type="taxonomic scope" value="Bacteria"/>
</dbReference>
<dbReference type="HOGENOM" id="CLU_108953_0_1_0"/>
<dbReference type="Proteomes" id="UP000006558">
    <property type="component" value="Chromosome"/>
</dbReference>
<dbReference type="GO" id="GO:0005829">
    <property type="term" value="C:cytosol"/>
    <property type="evidence" value="ECO:0007669"/>
    <property type="project" value="TreeGrafter"/>
</dbReference>
<dbReference type="GO" id="GO:0003723">
    <property type="term" value="F:RNA binding"/>
    <property type="evidence" value="ECO:0007669"/>
    <property type="project" value="UniProtKB-UniRule"/>
</dbReference>
<dbReference type="GO" id="GO:0070929">
    <property type="term" value="P:trans-translation"/>
    <property type="evidence" value="ECO:0007669"/>
    <property type="project" value="UniProtKB-UniRule"/>
</dbReference>
<dbReference type="CDD" id="cd09294">
    <property type="entry name" value="SmpB"/>
    <property type="match status" value="1"/>
</dbReference>
<dbReference type="Gene3D" id="2.40.280.10">
    <property type="match status" value="1"/>
</dbReference>
<dbReference type="HAMAP" id="MF_00023">
    <property type="entry name" value="SmpB"/>
    <property type="match status" value="1"/>
</dbReference>
<dbReference type="InterPro" id="IPR023620">
    <property type="entry name" value="SmpB"/>
</dbReference>
<dbReference type="InterPro" id="IPR000037">
    <property type="entry name" value="SsrA-bd_prot"/>
</dbReference>
<dbReference type="InterPro" id="IPR020081">
    <property type="entry name" value="SsrA-bd_prot_CS"/>
</dbReference>
<dbReference type="NCBIfam" id="NF003843">
    <property type="entry name" value="PRK05422.1"/>
    <property type="match status" value="1"/>
</dbReference>
<dbReference type="NCBIfam" id="TIGR00086">
    <property type="entry name" value="smpB"/>
    <property type="match status" value="1"/>
</dbReference>
<dbReference type="PANTHER" id="PTHR30308:SF2">
    <property type="entry name" value="SSRA-BINDING PROTEIN"/>
    <property type="match status" value="1"/>
</dbReference>
<dbReference type="PANTHER" id="PTHR30308">
    <property type="entry name" value="TMRNA-BINDING COMPONENT OF TRANS-TRANSLATION TAGGING COMPLEX"/>
    <property type="match status" value="1"/>
</dbReference>
<dbReference type="Pfam" id="PF01668">
    <property type="entry name" value="SmpB"/>
    <property type="match status" value="1"/>
</dbReference>
<dbReference type="SUPFAM" id="SSF74982">
    <property type="entry name" value="Small protein B (SmpB)"/>
    <property type="match status" value="1"/>
</dbReference>
<dbReference type="PROSITE" id="PS01317">
    <property type="entry name" value="SSRP"/>
    <property type="match status" value="1"/>
</dbReference>
<gene>
    <name evidence="1" type="primary">smpB</name>
    <name type="ordered locus">Tpet_0670</name>
</gene>
<organism>
    <name type="scientific">Thermotoga petrophila (strain ATCC BAA-488 / DSM 13995 / JCM 10881 / RKU-1)</name>
    <dbReference type="NCBI Taxonomy" id="390874"/>
    <lineage>
        <taxon>Bacteria</taxon>
        <taxon>Thermotogati</taxon>
        <taxon>Thermotogota</taxon>
        <taxon>Thermotogae</taxon>
        <taxon>Thermotogales</taxon>
        <taxon>Thermotogaceae</taxon>
        <taxon>Thermotoga</taxon>
    </lineage>
</organism>
<feature type="chain" id="PRO_1000002178" description="SsrA-binding protein">
    <location>
        <begin position="1"/>
        <end position="150"/>
    </location>
</feature>